<gene>
    <name evidence="1" type="primary">trpD</name>
    <name type="ordered locus">Rxyl_2095</name>
</gene>
<name>TRPD_RUBXD</name>
<reference key="1">
    <citation type="submission" date="2006-06" db="EMBL/GenBank/DDBJ databases">
        <title>Complete sequence of Rubrobacter xylanophilus DSM 9941.</title>
        <authorList>
            <consortium name="US DOE Joint Genome Institute"/>
            <person name="Copeland A."/>
            <person name="Lucas S."/>
            <person name="Lapidus A."/>
            <person name="Barry K."/>
            <person name="Detter J.C."/>
            <person name="Glavina del Rio T."/>
            <person name="Hammon N."/>
            <person name="Israni S."/>
            <person name="Dalin E."/>
            <person name="Tice H."/>
            <person name="Pitluck S."/>
            <person name="Munk A.C."/>
            <person name="Brettin T."/>
            <person name="Bruce D."/>
            <person name="Han C."/>
            <person name="Tapia R."/>
            <person name="Gilna P."/>
            <person name="Schmutz J."/>
            <person name="Larimer F."/>
            <person name="Land M."/>
            <person name="Hauser L."/>
            <person name="Kyrpides N."/>
            <person name="Lykidis A."/>
            <person name="da Costa M.S."/>
            <person name="Rainey F.A."/>
            <person name="Empadinhas N."/>
            <person name="Jolivet E."/>
            <person name="Battista J.R."/>
            <person name="Richardson P."/>
        </authorList>
    </citation>
    <scope>NUCLEOTIDE SEQUENCE [LARGE SCALE GENOMIC DNA]</scope>
    <source>
        <strain>DSM 9941 / JCM 11954 / NBRC 16129 / PRD-1</strain>
    </source>
</reference>
<proteinExistence type="inferred from homology"/>
<organism>
    <name type="scientific">Rubrobacter xylanophilus (strain DSM 9941 / JCM 11954 / NBRC 16129 / PRD-1)</name>
    <dbReference type="NCBI Taxonomy" id="266117"/>
    <lineage>
        <taxon>Bacteria</taxon>
        <taxon>Bacillati</taxon>
        <taxon>Actinomycetota</taxon>
        <taxon>Rubrobacteria</taxon>
        <taxon>Rubrobacterales</taxon>
        <taxon>Rubrobacteraceae</taxon>
        <taxon>Rubrobacter</taxon>
    </lineage>
</organism>
<keyword id="KW-0028">Amino-acid biosynthesis</keyword>
<keyword id="KW-0057">Aromatic amino acid biosynthesis</keyword>
<keyword id="KW-0328">Glycosyltransferase</keyword>
<keyword id="KW-0460">Magnesium</keyword>
<keyword id="KW-0479">Metal-binding</keyword>
<keyword id="KW-1185">Reference proteome</keyword>
<keyword id="KW-0808">Transferase</keyword>
<keyword id="KW-0822">Tryptophan biosynthesis</keyword>
<sequence length="342" mass="35379">MLREALRKAAAGEPLSEGEAERALETIMEGGASPEATAALLTALRVRGESVQEIVGFARAMRRFAARVRAPEGVVDTCGTGGDAKGTINVSTAAAFVARGAGVVIAKHGNRAATSRAGSADVLEALGAAIELSPEQVSRCIEEAGIGFMFARTHHPAMRHVAPVRAELPFRTVFNLLGPLTNPAGARRQLVGVFSAGYVRPMAEALEGLGAERALVVHGRDGMDEITVTGPTLVAEVGGGGVEEYEISPEDFGLSRHAPDGLLGGDAHLNARILRDVLSGEERGASRDVIVLNAGAAIYVAGKAPSIEEGVRLAEGSLESGAALAALERFVRVSRRLAGRGA</sequence>
<dbReference type="EC" id="2.4.2.18" evidence="1"/>
<dbReference type="EMBL" id="CP000386">
    <property type="protein sequence ID" value="ABG05039.1"/>
    <property type="molecule type" value="Genomic_DNA"/>
</dbReference>
<dbReference type="RefSeq" id="WP_011565054.1">
    <property type="nucleotide sequence ID" value="NC_008148.1"/>
</dbReference>
<dbReference type="SMR" id="Q1AU89"/>
<dbReference type="STRING" id="266117.Rxyl_2095"/>
<dbReference type="KEGG" id="rxy:Rxyl_2095"/>
<dbReference type="eggNOG" id="COG0547">
    <property type="taxonomic scope" value="Bacteria"/>
</dbReference>
<dbReference type="HOGENOM" id="CLU_034315_2_1_11"/>
<dbReference type="OrthoDB" id="9806430at2"/>
<dbReference type="PhylomeDB" id="Q1AU89"/>
<dbReference type="UniPathway" id="UPA00035">
    <property type="reaction ID" value="UER00041"/>
</dbReference>
<dbReference type="Proteomes" id="UP000006637">
    <property type="component" value="Chromosome"/>
</dbReference>
<dbReference type="GO" id="GO:0005829">
    <property type="term" value="C:cytosol"/>
    <property type="evidence" value="ECO:0007669"/>
    <property type="project" value="TreeGrafter"/>
</dbReference>
<dbReference type="GO" id="GO:0004048">
    <property type="term" value="F:anthranilate phosphoribosyltransferase activity"/>
    <property type="evidence" value="ECO:0007669"/>
    <property type="project" value="UniProtKB-UniRule"/>
</dbReference>
<dbReference type="GO" id="GO:0000287">
    <property type="term" value="F:magnesium ion binding"/>
    <property type="evidence" value="ECO:0007669"/>
    <property type="project" value="UniProtKB-UniRule"/>
</dbReference>
<dbReference type="GO" id="GO:0000162">
    <property type="term" value="P:L-tryptophan biosynthetic process"/>
    <property type="evidence" value="ECO:0007669"/>
    <property type="project" value="UniProtKB-UniRule"/>
</dbReference>
<dbReference type="FunFam" id="3.40.1030.10:FF:000002">
    <property type="entry name" value="Anthranilate phosphoribosyltransferase"/>
    <property type="match status" value="1"/>
</dbReference>
<dbReference type="Gene3D" id="3.40.1030.10">
    <property type="entry name" value="Nucleoside phosphorylase/phosphoribosyltransferase catalytic domain"/>
    <property type="match status" value="1"/>
</dbReference>
<dbReference type="Gene3D" id="1.20.970.10">
    <property type="entry name" value="Transferase, Pyrimidine Nucleoside Phosphorylase, Chain C"/>
    <property type="match status" value="1"/>
</dbReference>
<dbReference type="HAMAP" id="MF_00211">
    <property type="entry name" value="TrpD"/>
    <property type="match status" value="1"/>
</dbReference>
<dbReference type="InterPro" id="IPR005940">
    <property type="entry name" value="Anthranilate_Pribosyl_Tfrase"/>
</dbReference>
<dbReference type="InterPro" id="IPR000312">
    <property type="entry name" value="Glycosyl_Trfase_fam3"/>
</dbReference>
<dbReference type="InterPro" id="IPR017459">
    <property type="entry name" value="Glycosyl_Trfase_fam3_N_dom"/>
</dbReference>
<dbReference type="InterPro" id="IPR036320">
    <property type="entry name" value="Glycosyl_Trfase_fam3_N_dom_sf"/>
</dbReference>
<dbReference type="InterPro" id="IPR035902">
    <property type="entry name" value="Nuc_phospho_transferase"/>
</dbReference>
<dbReference type="NCBIfam" id="TIGR01245">
    <property type="entry name" value="trpD"/>
    <property type="match status" value="1"/>
</dbReference>
<dbReference type="PANTHER" id="PTHR43285">
    <property type="entry name" value="ANTHRANILATE PHOSPHORIBOSYLTRANSFERASE"/>
    <property type="match status" value="1"/>
</dbReference>
<dbReference type="PANTHER" id="PTHR43285:SF2">
    <property type="entry name" value="ANTHRANILATE PHOSPHORIBOSYLTRANSFERASE"/>
    <property type="match status" value="1"/>
</dbReference>
<dbReference type="Pfam" id="PF02885">
    <property type="entry name" value="Glycos_trans_3N"/>
    <property type="match status" value="1"/>
</dbReference>
<dbReference type="Pfam" id="PF00591">
    <property type="entry name" value="Glycos_transf_3"/>
    <property type="match status" value="1"/>
</dbReference>
<dbReference type="SUPFAM" id="SSF52418">
    <property type="entry name" value="Nucleoside phosphorylase/phosphoribosyltransferase catalytic domain"/>
    <property type="match status" value="1"/>
</dbReference>
<dbReference type="SUPFAM" id="SSF47648">
    <property type="entry name" value="Nucleoside phosphorylase/phosphoribosyltransferase N-terminal domain"/>
    <property type="match status" value="1"/>
</dbReference>
<evidence type="ECO:0000255" key="1">
    <source>
        <dbReference type="HAMAP-Rule" id="MF_00211"/>
    </source>
</evidence>
<accession>Q1AU89</accession>
<protein>
    <recommendedName>
        <fullName evidence="1">Anthranilate phosphoribosyltransferase</fullName>
        <ecNumber evidence="1">2.4.2.18</ecNumber>
    </recommendedName>
</protein>
<feature type="chain" id="PRO_0000325459" description="Anthranilate phosphoribosyltransferase">
    <location>
        <begin position="1"/>
        <end position="342"/>
    </location>
</feature>
<feature type="binding site" evidence="1">
    <location>
        <position position="79"/>
    </location>
    <ligand>
        <name>5-phospho-alpha-D-ribose 1-diphosphate</name>
        <dbReference type="ChEBI" id="CHEBI:58017"/>
    </ligand>
</feature>
<feature type="binding site" evidence="1">
    <location>
        <position position="79"/>
    </location>
    <ligand>
        <name>anthranilate</name>
        <dbReference type="ChEBI" id="CHEBI:16567"/>
        <label>1</label>
    </ligand>
</feature>
<feature type="binding site" evidence="1">
    <location>
        <begin position="82"/>
        <end position="83"/>
    </location>
    <ligand>
        <name>5-phospho-alpha-D-ribose 1-diphosphate</name>
        <dbReference type="ChEBI" id="CHEBI:58017"/>
    </ligand>
</feature>
<feature type="binding site" evidence="1">
    <location>
        <position position="87"/>
    </location>
    <ligand>
        <name>5-phospho-alpha-D-ribose 1-diphosphate</name>
        <dbReference type="ChEBI" id="CHEBI:58017"/>
    </ligand>
</feature>
<feature type="binding site" evidence="1">
    <location>
        <begin position="89"/>
        <end position="92"/>
    </location>
    <ligand>
        <name>5-phospho-alpha-D-ribose 1-diphosphate</name>
        <dbReference type="ChEBI" id="CHEBI:58017"/>
    </ligand>
</feature>
<feature type="binding site" evidence="1">
    <location>
        <position position="91"/>
    </location>
    <ligand>
        <name>Mg(2+)</name>
        <dbReference type="ChEBI" id="CHEBI:18420"/>
        <label>1</label>
    </ligand>
</feature>
<feature type="binding site" evidence="1">
    <location>
        <begin position="107"/>
        <end position="115"/>
    </location>
    <ligand>
        <name>5-phospho-alpha-D-ribose 1-diphosphate</name>
        <dbReference type="ChEBI" id="CHEBI:58017"/>
    </ligand>
</feature>
<feature type="binding site" evidence="1">
    <location>
        <position position="110"/>
    </location>
    <ligand>
        <name>anthranilate</name>
        <dbReference type="ChEBI" id="CHEBI:16567"/>
        <label>1</label>
    </ligand>
</feature>
<feature type="binding site" evidence="1">
    <location>
        <position position="119"/>
    </location>
    <ligand>
        <name>5-phospho-alpha-D-ribose 1-diphosphate</name>
        <dbReference type="ChEBI" id="CHEBI:58017"/>
    </ligand>
</feature>
<feature type="binding site" evidence="1">
    <location>
        <position position="165"/>
    </location>
    <ligand>
        <name>anthranilate</name>
        <dbReference type="ChEBI" id="CHEBI:16567"/>
        <label>2</label>
    </ligand>
</feature>
<feature type="binding site" evidence="1">
    <location>
        <position position="224"/>
    </location>
    <ligand>
        <name>Mg(2+)</name>
        <dbReference type="ChEBI" id="CHEBI:18420"/>
        <label>2</label>
    </ligand>
</feature>
<feature type="binding site" evidence="1">
    <location>
        <position position="225"/>
    </location>
    <ligand>
        <name>Mg(2+)</name>
        <dbReference type="ChEBI" id="CHEBI:18420"/>
        <label>1</label>
    </ligand>
</feature>
<feature type="binding site" evidence="1">
    <location>
        <position position="225"/>
    </location>
    <ligand>
        <name>Mg(2+)</name>
        <dbReference type="ChEBI" id="CHEBI:18420"/>
        <label>2</label>
    </ligand>
</feature>
<comment type="function">
    <text evidence="1">Catalyzes the transfer of the phosphoribosyl group of 5-phosphorylribose-1-pyrophosphate (PRPP) to anthranilate to yield N-(5'-phosphoribosyl)-anthranilate (PRA).</text>
</comment>
<comment type="catalytic activity">
    <reaction evidence="1">
        <text>N-(5-phospho-beta-D-ribosyl)anthranilate + diphosphate = 5-phospho-alpha-D-ribose 1-diphosphate + anthranilate</text>
        <dbReference type="Rhea" id="RHEA:11768"/>
        <dbReference type="ChEBI" id="CHEBI:16567"/>
        <dbReference type="ChEBI" id="CHEBI:18277"/>
        <dbReference type="ChEBI" id="CHEBI:33019"/>
        <dbReference type="ChEBI" id="CHEBI:58017"/>
        <dbReference type="EC" id="2.4.2.18"/>
    </reaction>
</comment>
<comment type="cofactor">
    <cofactor evidence="1">
        <name>Mg(2+)</name>
        <dbReference type="ChEBI" id="CHEBI:18420"/>
    </cofactor>
    <text evidence="1">Binds 2 magnesium ions per monomer.</text>
</comment>
<comment type="pathway">
    <text evidence="1">Amino-acid biosynthesis; L-tryptophan biosynthesis; L-tryptophan from chorismate: step 2/5.</text>
</comment>
<comment type="subunit">
    <text evidence="1">Homodimer.</text>
</comment>
<comment type="similarity">
    <text evidence="1">Belongs to the anthranilate phosphoribosyltransferase family.</text>
</comment>